<feature type="chain" id="PRO_0000184412" description="L-aspartate oxidase">
    <location>
        <begin position="1"/>
        <end position="472"/>
    </location>
</feature>
<feature type="active site" description="Proton donor/acceptor" evidence="1">
    <location>
        <position position="257"/>
    </location>
</feature>
<feature type="binding site" evidence="2 7">
    <location>
        <begin position="7"/>
        <end position="10"/>
    </location>
    <ligand>
        <name>FAD</name>
        <dbReference type="ChEBI" id="CHEBI:57692"/>
    </ligand>
</feature>
<feature type="binding site" evidence="2 7">
    <location>
        <position position="29"/>
    </location>
    <ligand>
        <name>FAD</name>
        <dbReference type="ChEBI" id="CHEBI:57692"/>
    </ligand>
</feature>
<feature type="binding site" evidence="2 7">
    <location>
        <begin position="36"/>
        <end position="37"/>
    </location>
    <ligand>
        <name>FAD</name>
        <dbReference type="ChEBI" id="CHEBI:57692"/>
    </ligand>
</feature>
<feature type="binding site" evidence="2 7">
    <location>
        <begin position="42"/>
        <end position="43"/>
    </location>
    <ligand>
        <name>FAD</name>
        <dbReference type="ChEBI" id="CHEBI:57692"/>
    </ligand>
</feature>
<feature type="binding site" evidence="2 7">
    <location>
        <position position="191"/>
    </location>
    <ligand>
        <name>FAD</name>
        <dbReference type="ChEBI" id="CHEBI:57692"/>
    </ligand>
</feature>
<feature type="binding site" evidence="2 7">
    <location>
        <position position="337"/>
    </location>
    <ligand>
        <name>FAD</name>
        <dbReference type="ChEBI" id="CHEBI:57692"/>
    </ligand>
</feature>
<feature type="binding site" evidence="2 7">
    <location>
        <begin position="353"/>
        <end position="354"/>
    </location>
    <ligand>
        <name>FAD</name>
        <dbReference type="ChEBI" id="CHEBI:57692"/>
    </ligand>
</feature>
<feature type="site" description="Important in orienting the L-aspartate substrate" evidence="1">
    <location>
        <position position="102"/>
    </location>
</feature>
<feature type="strand" evidence="8">
    <location>
        <begin position="2"/>
        <end position="5"/>
    </location>
</feature>
<feature type="helix" evidence="8">
    <location>
        <begin position="9"/>
        <end position="20"/>
    </location>
</feature>
<feature type="strand" evidence="8">
    <location>
        <begin position="25"/>
        <end position="28"/>
    </location>
</feature>
<feature type="helix" evidence="8">
    <location>
        <begin position="37"/>
        <end position="39"/>
    </location>
</feature>
<feature type="helix" evidence="8">
    <location>
        <begin position="54"/>
        <end position="65"/>
    </location>
</feature>
<feature type="helix" evidence="8">
    <location>
        <begin position="71"/>
        <end position="90"/>
    </location>
</feature>
<feature type="strand" evidence="8">
    <location>
        <begin position="113"/>
        <end position="115"/>
    </location>
</feature>
<feature type="helix" evidence="8">
    <location>
        <begin position="117"/>
        <end position="131"/>
    </location>
</feature>
<feature type="strand" evidence="8">
    <location>
        <begin position="141"/>
        <end position="147"/>
    </location>
</feature>
<feature type="strand" evidence="8">
    <location>
        <begin position="150"/>
        <end position="156"/>
    </location>
</feature>
<feature type="turn" evidence="8">
    <location>
        <begin position="157"/>
        <end position="159"/>
    </location>
</feature>
<feature type="strand" evidence="8">
    <location>
        <begin position="160"/>
        <end position="162"/>
    </location>
</feature>
<feature type="strand" evidence="8">
    <location>
        <begin position="166"/>
        <end position="170"/>
    </location>
</feature>
<feature type="helix" evidence="8">
    <location>
        <begin position="176"/>
        <end position="178"/>
    </location>
</feature>
<feature type="strand" evidence="8">
    <location>
        <begin position="179"/>
        <end position="184"/>
    </location>
</feature>
<feature type="helix" evidence="8">
    <location>
        <begin position="191"/>
        <end position="198"/>
    </location>
</feature>
<feature type="strand" evidence="8">
    <location>
        <begin position="209"/>
        <end position="216"/>
    </location>
</feature>
<feature type="helix" evidence="8">
    <location>
        <begin position="218"/>
        <end position="220"/>
    </location>
</feature>
<feature type="helix" evidence="8">
    <location>
        <begin position="228"/>
        <end position="231"/>
    </location>
</feature>
<feature type="strand" evidence="8">
    <location>
        <begin position="235"/>
        <end position="238"/>
    </location>
</feature>
<feature type="helix" evidence="8">
    <location>
        <begin position="244"/>
        <end position="247"/>
    </location>
</feature>
<feature type="helix" evidence="8">
    <location>
        <begin position="252"/>
        <end position="254"/>
    </location>
</feature>
<feature type="helix" evidence="8">
    <location>
        <begin position="257"/>
        <end position="269"/>
    </location>
</feature>
<feature type="strand" evidence="8">
    <location>
        <begin position="274"/>
        <end position="277"/>
    </location>
</feature>
<feature type="helix" evidence="8">
    <location>
        <begin position="284"/>
        <end position="287"/>
    </location>
</feature>
<feature type="helix" evidence="8">
    <location>
        <begin position="289"/>
        <end position="297"/>
    </location>
</feature>
<feature type="strand" evidence="8">
    <location>
        <begin position="309"/>
        <end position="316"/>
    </location>
</feature>
<feature type="strand" evidence="8">
    <location>
        <begin position="318"/>
        <end position="320"/>
    </location>
</feature>
<feature type="strand" evidence="8">
    <location>
        <begin position="328"/>
        <end position="330"/>
    </location>
</feature>
<feature type="strand" evidence="8">
    <location>
        <begin position="332"/>
        <end position="334"/>
    </location>
</feature>
<feature type="helix" evidence="8">
    <location>
        <begin position="336"/>
        <end position="338"/>
    </location>
</feature>
<feature type="strand" evidence="8">
    <location>
        <begin position="342"/>
        <end position="344"/>
    </location>
</feature>
<feature type="helix" evidence="8">
    <location>
        <begin position="352"/>
        <end position="363"/>
    </location>
</feature>
<feature type="helix" evidence="8">
    <location>
        <begin position="364"/>
        <end position="366"/>
    </location>
</feature>
<feature type="turn" evidence="8">
    <location>
        <begin position="367"/>
        <end position="369"/>
    </location>
</feature>
<feature type="strand" evidence="8">
    <location>
        <begin position="380"/>
        <end position="385"/>
    </location>
</feature>
<feature type="helix" evidence="8">
    <location>
        <begin position="395"/>
        <end position="405"/>
    </location>
</feature>
<feature type="strand" evidence="8">
    <location>
        <begin position="406"/>
        <end position="410"/>
    </location>
</feature>
<feature type="helix" evidence="8">
    <location>
        <begin position="412"/>
        <end position="422"/>
    </location>
</feature>
<feature type="helix" evidence="8">
    <location>
        <begin position="428"/>
        <end position="442"/>
    </location>
</feature>
<feature type="helix" evidence="8">
    <location>
        <begin position="460"/>
        <end position="462"/>
    </location>
</feature>
<feature type="strand" evidence="8">
    <location>
        <begin position="464"/>
        <end position="470"/>
    </location>
</feature>
<name>NADB_SULTO</name>
<dbReference type="EC" id="1.4.3.16" evidence="2 3"/>
<dbReference type="EMBL" id="BA000023">
    <property type="protein sequence ID" value="BAK54476.1"/>
    <property type="molecule type" value="Genomic_DNA"/>
</dbReference>
<dbReference type="RefSeq" id="WP_010979215.1">
    <property type="nucleotide sequence ID" value="NC_003106.2"/>
</dbReference>
<dbReference type="PDB" id="2E5V">
    <property type="method" value="X-ray"/>
    <property type="resolution" value="2.09 A"/>
    <property type="chains" value="A/B=1-472"/>
</dbReference>
<dbReference type="PDBsum" id="2E5V"/>
<dbReference type="SMR" id="Q972D2"/>
<dbReference type="STRING" id="273063.STK_11960"/>
<dbReference type="GeneID" id="1459193"/>
<dbReference type="KEGG" id="sto:STK_11960"/>
<dbReference type="PATRIC" id="fig|273063.9.peg.1352"/>
<dbReference type="eggNOG" id="arCOG00572">
    <property type="taxonomic scope" value="Archaea"/>
</dbReference>
<dbReference type="OrthoDB" id="23539at2157"/>
<dbReference type="BRENDA" id="1.4.3.16">
    <property type="organism ID" value="15396"/>
</dbReference>
<dbReference type="UniPathway" id="UPA00253">
    <property type="reaction ID" value="UER00326"/>
</dbReference>
<dbReference type="EvolutionaryTrace" id="Q972D2"/>
<dbReference type="Proteomes" id="UP000001015">
    <property type="component" value="Chromosome"/>
</dbReference>
<dbReference type="GO" id="GO:0005737">
    <property type="term" value="C:cytoplasm"/>
    <property type="evidence" value="ECO:0007669"/>
    <property type="project" value="UniProtKB-SubCell"/>
</dbReference>
<dbReference type="GO" id="GO:0008734">
    <property type="term" value="F:L-aspartate oxidase activity"/>
    <property type="evidence" value="ECO:0007669"/>
    <property type="project" value="UniProtKB-EC"/>
</dbReference>
<dbReference type="GO" id="GO:0000166">
    <property type="term" value="F:nucleotide binding"/>
    <property type="evidence" value="ECO:0007669"/>
    <property type="project" value="UniProtKB-KW"/>
</dbReference>
<dbReference type="GO" id="GO:0009435">
    <property type="term" value="P:NAD biosynthetic process"/>
    <property type="evidence" value="ECO:0007669"/>
    <property type="project" value="UniProtKB-UniPathway"/>
</dbReference>
<dbReference type="Gene3D" id="3.50.50.60">
    <property type="entry name" value="FAD/NAD(P)-binding domain"/>
    <property type="match status" value="1"/>
</dbReference>
<dbReference type="Gene3D" id="1.20.58.100">
    <property type="entry name" value="Fumarate reductase/succinate dehydrogenase flavoprotein-like, C-terminal domain"/>
    <property type="match status" value="1"/>
</dbReference>
<dbReference type="Gene3D" id="3.90.700.10">
    <property type="entry name" value="Succinate dehydrogenase/fumarate reductase flavoprotein, catalytic domain"/>
    <property type="match status" value="1"/>
</dbReference>
<dbReference type="InterPro" id="IPR003953">
    <property type="entry name" value="FAD-dep_OxRdtase_2_FAD-bd"/>
</dbReference>
<dbReference type="InterPro" id="IPR036188">
    <property type="entry name" value="FAD/NAD-bd_sf"/>
</dbReference>
<dbReference type="InterPro" id="IPR037099">
    <property type="entry name" value="Fum_R/Succ_DH_flav-like_C_sf"/>
</dbReference>
<dbReference type="InterPro" id="IPR015939">
    <property type="entry name" value="Fum_Rdtase/Succ_DH_flav-like_C"/>
</dbReference>
<dbReference type="InterPro" id="IPR005288">
    <property type="entry name" value="NadB"/>
</dbReference>
<dbReference type="InterPro" id="IPR027477">
    <property type="entry name" value="Succ_DH/fumarate_Rdtase_cat_sf"/>
</dbReference>
<dbReference type="PANTHER" id="PTHR42716">
    <property type="entry name" value="L-ASPARTATE OXIDASE"/>
    <property type="match status" value="1"/>
</dbReference>
<dbReference type="PANTHER" id="PTHR42716:SF2">
    <property type="entry name" value="L-ASPARTATE OXIDASE, CHLOROPLASTIC"/>
    <property type="match status" value="1"/>
</dbReference>
<dbReference type="Pfam" id="PF00890">
    <property type="entry name" value="FAD_binding_2"/>
    <property type="match status" value="1"/>
</dbReference>
<dbReference type="Pfam" id="PF02910">
    <property type="entry name" value="Succ_DH_flav_C"/>
    <property type="match status" value="1"/>
</dbReference>
<dbReference type="PRINTS" id="PR00368">
    <property type="entry name" value="FADPNR"/>
</dbReference>
<dbReference type="SUPFAM" id="SSF51905">
    <property type="entry name" value="FAD/NAD(P)-binding domain"/>
    <property type="match status" value="1"/>
</dbReference>
<dbReference type="SUPFAM" id="SSF46977">
    <property type="entry name" value="Succinate dehydrogenase/fumarate reductase flavoprotein C-terminal domain"/>
    <property type="match status" value="1"/>
</dbReference>
<dbReference type="SUPFAM" id="SSF56425">
    <property type="entry name" value="Succinate dehydrogenase/fumarate reductase flavoprotein, catalytic domain"/>
    <property type="match status" value="1"/>
</dbReference>
<evidence type="ECO:0000250" key="1">
    <source>
        <dbReference type="UniProtKB" id="P10902"/>
    </source>
</evidence>
<evidence type="ECO:0000269" key="2">
    <source>
    </source>
</evidence>
<evidence type="ECO:0000269" key="3">
    <source>
    </source>
</evidence>
<evidence type="ECO:0000303" key="4">
    <source>
    </source>
</evidence>
<evidence type="ECO:0000303" key="5">
    <source>
    </source>
</evidence>
<evidence type="ECO:0000305" key="6"/>
<evidence type="ECO:0007744" key="7">
    <source>
        <dbReference type="PDB" id="2E5V"/>
    </source>
</evidence>
<evidence type="ECO:0007829" key="8">
    <source>
        <dbReference type="PDB" id="2E5V"/>
    </source>
</evidence>
<proteinExistence type="evidence at protein level"/>
<accession>Q972D2</accession>
<accession>F9VNW8</accession>
<gene>
    <name evidence="4" type="primary">nadB</name>
    <name type="ordered locus">STK_11960</name>
</gene>
<keyword id="KW-0002">3D-structure</keyword>
<keyword id="KW-0963">Cytoplasm</keyword>
<keyword id="KW-0274">FAD</keyword>
<keyword id="KW-0285">Flavoprotein</keyword>
<keyword id="KW-0547">Nucleotide-binding</keyword>
<keyword id="KW-0560">Oxidoreductase</keyword>
<keyword id="KW-0662">Pyridine nucleotide biosynthesis</keyword>
<keyword id="KW-1185">Reference proteome</keyword>
<reference key="1">
    <citation type="journal article" date="2001" name="DNA Res.">
        <title>Complete genome sequence of an aerobic thermoacidophilic Crenarchaeon, Sulfolobus tokodaii strain7.</title>
        <authorList>
            <person name="Kawarabayasi Y."/>
            <person name="Hino Y."/>
            <person name="Horikawa H."/>
            <person name="Jin-no K."/>
            <person name="Takahashi M."/>
            <person name="Sekine M."/>
            <person name="Baba S."/>
            <person name="Ankai A."/>
            <person name="Kosugi H."/>
            <person name="Hosoyama A."/>
            <person name="Fukui S."/>
            <person name="Nagai Y."/>
            <person name="Nishijima K."/>
            <person name="Otsuka R."/>
            <person name="Nakazawa H."/>
            <person name="Takamiya M."/>
            <person name="Kato Y."/>
            <person name="Yoshizawa T."/>
            <person name="Tanaka T."/>
            <person name="Kudoh Y."/>
            <person name="Yamazaki J."/>
            <person name="Kushida N."/>
            <person name="Oguchi A."/>
            <person name="Aoki K."/>
            <person name="Masuda S."/>
            <person name="Yanagii M."/>
            <person name="Nishimura M."/>
            <person name="Yamagishi A."/>
            <person name="Oshima T."/>
            <person name="Kikuchi H."/>
        </authorList>
    </citation>
    <scope>NUCLEOTIDE SEQUENCE [LARGE SCALE GENOMIC DNA]</scope>
    <source>
        <strain>DSM 16993 / JCM 10545 / NBRC 100140 / 7</strain>
    </source>
</reference>
<reference key="2">
    <citation type="journal article" date="2013" name="Appl. Microbiol. Biotechnol.">
        <title>A thermostable L-aspartate oxidase: a new tool for biotechnological applications.</title>
        <authorList>
            <person name="Bifulco D."/>
            <person name="Pollegioni L."/>
            <person name="Tessaro D."/>
            <person name="Servi S."/>
            <person name="Molla G."/>
        </authorList>
    </citation>
    <scope>FUNCTION</scope>
    <scope>CATALYTIC ACTIVITY</scope>
    <scope>COFACTOR</scope>
    <scope>BIOPHYSICOCHEMICAL PROPERTIES</scope>
    <scope>SUBUNIT</scope>
</reference>
<reference evidence="7" key="3">
    <citation type="journal article" date="2008" name="Biochim. Biophys. Acta">
        <title>Structure of l-aspartate oxidase from the hyperthermophilic archaeon Sulfolobus tokodaii.</title>
        <authorList>
            <person name="Sakuraba H."/>
            <person name="Yoneda K."/>
            <person name="Asai I."/>
            <person name="Tsuge H."/>
            <person name="Katunuma N."/>
            <person name="Ohshima T."/>
        </authorList>
    </citation>
    <scope>X-RAY CRYSTALLOGRAPHY (2.09 ANGSTROMS) IN COMPLEX WITH FAD</scope>
    <scope>FUNCTION</scope>
    <scope>CATALYTIC ACTIVITY</scope>
    <scope>COFACTOR</scope>
    <scope>BIOPHYSICOCHEMICAL PROPERTIES</scope>
    <scope>SUBUNIT</scope>
    <scope>DOMAIN</scope>
</reference>
<organism>
    <name type="scientific">Sulfurisphaera tokodaii (strain DSM 16993 / JCM 10545 / NBRC 100140 / 7)</name>
    <name type="common">Sulfolobus tokodaii</name>
    <dbReference type="NCBI Taxonomy" id="273063"/>
    <lineage>
        <taxon>Archaea</taxon>
        <taxon>Thermoproteota</taxon>
        <taxon>Thermoprotei</taxon>
        <taxon>Sulfolobales</taxon>
        <taxon>Sulfolobaceae</taxon>
        <taxon>Sulfurisphaera</taxon>
    </lineage>
</organism>
<protein>
    <recommendedName>
        <fullName evidence="4">L-aspartate oxidase</fullName>
        <shortName evidence="4">LAO</shortName>
        <shortName evidence="5">LASPO</shortName>
        <ecNumber evidence="2 3">1.4.3.16</ecNumber>
    </recommendedName>
    <alternativeName>
        <fullName>Quinolinate synthase B</fullName>
    </alternativeName>
</protein>
<sequence>MIYIIGSGIAGLSAGVALRRAGKKVTLISKRIDGGSTPIAKGGVAASVGSDDSPELHAQDTIRVGDGLCDVKTVNYVTSEAKNVIETFESWGFEFEEDLRLEGGHTKRRVLHRTDETGREIFNFLLKLAREEGIPIIEDRLVEIRVKDGKVTGFVTEKRGLVEDVDKLVLATGGYSYLYEYSSTQSTNIGDGMAIAFKAGTILADMEFVQFHPTVTSLDGEVFLLTETLRGEGAQIINENGERFLFNYDKRGELAPRDILSRAIYIEMLKGHKVFIDLSKIEDFERKFPVVAKYLARHGHNYKVKIPIFPAAHFVDGGIRVNIRGESNIVNLYAIGEVSDSGLHGANRLASNSLLEGLVFGINLPRYVDSSWEGISTDDGIVHSVRISGNKTLSLKEIRRINWENVGIIRNEEKLVKAINTYSSSTQNEAIISYLTALAAEIRKESRGNHFREDYPYKDPNWEKRIYFKLVV</sequence>
<comment type="function">
    <text evidence="2 3">Catalyzes the oxidation of L-aspartate to iminoaspartate, the first step in the de novo biosynthesis of NAD(+) (PubMed:18226609, PubMed:23371294). Can also use L-asparagine, but not L-phenylalanine, L-glutamate, glycine, L-proline, L-alanine and D-aspartate (PubMed:23371294).</text>
</comment>
<comment type="catalytic activity">
    <reaction evidence="2 3">
        <text>L-aspartate + O2 = iminosuccinate + H2O2</text>
        <dbReference type="Rhea" id="RHEA:25876"/>
        <dbReference type="ChEBI" id="CHEBI:15379"/>
        <dbReference type="ChEBI" id="CHEBI:16240"/>
        <dbReference type="ChEBI" id="CHEBI:29991"/>
        <dbReference type="ChEBI" id="CHEBI:77875"/>
        <dbReference type="EC" id="1.4.3.16"/>
    </reaction>
    <physiologicalReaction direction="left-to-right" evidence="2 3">
        <dbReference type="Rhea" id="RHEA:25877"/>
    </physiologicalReaction>
</comment>
<comment type="cofactor">
    <cofactor evidence="2 3">
        <name>FAD</name>
        <dbReference type="ChEBI" id="CHEBI:57692"/>
    </cofactor>
    <text evidence="2">Binds 1 FAD per subunit.</text>
</comment>
<comment type="biophysicochemical properties">
    <kinetics>
        <KM evidence="2 3">1.3 mM for L-aspartate</KM>
        <KM evidence="3">18.1 mM for L-asparagine</KM>
        <Vmax evidence="3">0.98 umol/min/mg enzyme with L-aspartate as substrate</Vmax>
        <Vmax evidence="3">0.22 umol/min/mg enzyme with L-asparagine as substrate</Vmax>
    </kinetics>
    <phDependence>
        <text evidence="2 3">Optimum pH is 8.0 (for L-aspartate oxidation) (PubMed:18226609). Optimum pH is about 10.0. Stable between pH 7.0 and 10.0 (PubMed:23371294).</text>
    </phDependence>
    <temperatureDependence>
        <text evidence="3">Optimum temperature is 65 degrees Celsius. Thermostable up to 80 degrees Celsius.</text>
    </temperatureDependence>
</comment>
<comment type="pathway">
    <text evidence="6">Cofactor biosynthesis; NAD(+) biosynthesis; iminoaspartate from L-aspartate (oxidase route): step 1/1.</text>
</comment>
<comment type="subunit">
    <text evidence="2 3">Monomer.</text>
</comment>
<comment type="subcellular location">
    <subcellularLocation>
        <location evidence="6">Cytoplasm</location>
    </subcellularLocation>
</comment>
<comment type="domain">
    <text evidence="2">Folds into three domains: the FAD-binding domain, the capping domain and the C-terminal helical domain.</text>
</comment>
<comment type="similarity">
    <text evidence="6">Belongs to the FAD-dependent oxidoreductase 2 family. NadB subfamily.</text>
</comment>